<evidence type="ECO:0000250" key="1"/>
<evidence type="ECO:0000305" key="2"/>
<name>SMS2_PELRI</name>
<protein>
    <recommendedName>
        <fullName>Somatostatin-2</fullName>
    </recommendedName>
    <alternativeName>
        <fullName>PSS2</fullName>
    </alternativeName>
    <component>
        <recommendedName>
            <fullName>[Pro2,Met13]-somatostatin-14</fullName>
        </recommendedName>
        <alternativeName>
            <fullName>Somatostatin-2</fullName>
            <shortName>S-2</shortName>
            <shortName>SS2</shortName>
        </alternativeName>
    </component>
</protein>
<reference key="1">
    <citation type="journal article" date="1996" name="Proc. Natl. Acad. Sci. U.S.A.">
        <title>Occurrence of two somatostatin variants in the frog brain: characterization of the cDNAs, distribution of the mRNAs, and receptor-binding affinities of the peptides.</title>
        <authorList>
            <person name="Tostivint H."/>
            <person name="Lihrmann I."/>
            <person name="Bucharles C."/>
            <person name="Vieau D."/>
            <person name="Coulouarn Y."/>
            <person name="Fournier A."/>
            <person name="Conlon J.M."/>
            <person name="Vaudry H."/>
        </authorList>
    </citation>
    <scope>NUCLEOTIDE SEQUENCE [MRNA]</scope>
    <source>
        <tissue>Brain</tissue>
    </source>
</reference>
<reference key="2">
    <citation type="journal article" date="1992" name="Biochem. Biophys. Res. Commun.">
        <title>Isolation of [Pro2,Met13]somatostatin-14 and somatostatin-14 from the frog brain reveals the existence of a somatostatin gene family in a tetrapod.</title>
        <authorList>
            <person name="Vaudry H."/>
            <person name="Chartrel N."/>
            <person name="Conlon J.M."/>
        </authorList>
    </citation>
    <scope>PROTEIN SEQUENCE OF 90-103</scope>
    <source>
        <tissue>Brain</tissue>
    </source>
</reference>
<keyword id="KW-0165">Cleavage on pair of basic residues</keyword>
<keyword id="KW-0903">Direct protein sequencing</keyword>
<keyword id="KW-1015">Disulfide bond</keyword>
<keyword id="KW-0372">Hormone</keyword>
<keyword id="KW-0964">Secreted</keyword>
<keyword id="KW-0732">Signal</keyword>
<organism>
    <name type="scientific">Pelophylax ridibundus</name>
    <name type="common">Marsh frog</name>
    <name type="synonym">Rana ridibunda</name>
    <dbReference type="NCBI Taxonomy" id="8406"/>
    <lineage>
        <taxon>Eukaryota</taxon>
        <taxon>Metazoa</taxon>
        <taxon>Chordata</taxon>
        <taxon>Craniata</taxon>
        <taxon>Vertebrata</taxon>
        <taxon>Euteleostomi</taxon>
        <taxon>Amphibia</taxon>
        <taxon>Batrachia</taxon>
        <taxon>Anura</taxon>
        <taxon>Neobatrachia</taxon>
        <taxon>Ranoidea</taxon>
        <taxon>Ranidae</taxon>
        <taxon>Pelophylax</taxon>
    </lineage>
</organism>
<accession>P87385</accession>
<dbReference type="EMBL" id="U68137">
    <property type="protein sequence ID" value="AAC60094.1"/>
    <property type="molecule type" value="mRNA"/>
</dbReference>
<dbReference type="PIR" id="JC6167">
    <property type="entry name" value="JC6167"/>
</dbReference>
<dbReference type="GO" id="GO:0005615">
    <property type="term" value="C:extracellular space"/>
    <property type="evidence" value="ECO:0007669"/>
    <property type="project" value="TreeGrafter"/>
</dbReference>
<dbReference type="GO" id="GO:0001664">
    <property type="term" value="F:G protein-coupled receptor binding"/>
    <property type="evidence" value="ECO:0007669"/>
    <property type="project" value="TreeGrafter"/>
</dbReference>
<dbReference type="GO" id="GO:0005184">
    <property type="term" value="F:neuropeptide hormone activity"/>
    <property type="evidence" value="ECO:0007669"/>
    <property type="project" value="TreeGrafter"/>
</dbReference>
<dbReference type="GO" id="GO:0007193">
    <property type="term" value="P:adenylate cyclase-inhibiting G protein-coupled receptor signaling pathway"/>
    <property type="evidence" value="ECO:0007669"/>
    <property type="project" value="TreeGrafter"/>
</dbReference>
<dbReference type="GO" id="GO:0030334">
    <property type="term" value="P:regulation of cell migration"/>
    <property type="evidence" value="ECO:0007669"/>
    <property type="project" value="TreeGrafter"/>
</dbReference>
<dbReference type="InterPro" id="IPR004250">
    <property type="entry name" value="Somatostatin"/>
</dbReference>
<dbReference type="InterPro" id="IPR018142">
    <property type="entry name" value="Somatostatin/Cortistatin_C"/>
</dbReference>
<dbReference type="PANTHER" id="PTHR10558:SF1">
    <property type="entry name" value="CORTISTATIN"/>
    <property type="match status" value="1"/>
</dbReference>
<dbReference type="PANTHER" id="PTHR10558">
    <property type="entry name" value="SOMATOSTATIN"/>
    <property type="match status" value="1"/>
</dbReference>
<dbReference type="Pfam" id="PF03002">
    <property type="entry name" value="Somatostatin"/>
    <property type="match status" value="1"/>
</dbReference>
<dbReference type="PIRSF" id="PIRSF001814">
    <property type="entry name" value="Somatostatin"/>
    <property type="match status" value="1"/>
</dbReference>
<comment type="function">
    <text>Somatostatin inhibits the release of somatotropin.</text>
</comment>
<comment type="subcellular location">
    <subcellularLocation>
        <location>Secreted</location>
    </subcellularLocation>
</comment>
<comment type="similarity">
    <text evidence="2">Belongs to the somatostatin family.</text>
</comment>
<gene>
    <name type="primary">sst2</name>
</gene>
<feature type="signal peptide" evidence="1">
    <location>
        <begin position="1"/>
        <end position="21"/>
    </location>
</feature>
<feature type="propeptide" id="PRO_0000033111" evidence="1">
    <location>
        <begin position="22"/>
        <end position="87"/>
    </location>
</feature>
<feature type="peptide" id="PRO_0000033112" description="[Pro2,Met13]-somatostatin-14">
    <location>
        <begin position="90"/>
        <end position="103"/>
    </location>
</feature>
<feature type="disulfide bond" evidence="1">
    <location>
        <begin position="92"/>
        <end position="103"/>
    </location>
</feature>
<proteinExistence type="evidence at protein level"/>
<sequence>MLGSAGTLLLLLLAWGARALSQPDDNRITTGRNQDLNAIQQDLLLKLLSGWTDSRESNLVEVERNVPDPPEPKIPPSVKFPRLSLRERKAPCKNFFWKTFTMC</sequence>